<accession>A3M1Z8</accession>
<gene>
    <name evidence="1" type="primary">proA</name>
    <name type="ordered locus">A1S_0489</name>
</gene>
<evidence type="ECO:0000255" key="1">
    <source>
        <dbReference type="HAMAP-Rule" id="MF_00412"/>
    </source>
</evidence>
<dbReference type="EC" id="1.2.1.41" evidence="1"/>
<dbReference type="EMBL" id="CP000521">
    <property type="protein sequence ID" value="ABO10942.2"/>
    <property type="molecule type" value="Genomic_DNA"/>
</dbReference>
<dbReference type="RefSeq" id="WP_001154160.1">
    <property type="nucleotide sequence ID" value="NZ_CACVBA010000001.1"/>
</dbReference>
<dbReference type="SMR" id="A3M1Z8"/>
<dbReference type="KEGG" id="acb:A1S_0489"/>
<dbReference type="HOGENOM" id="CLU_030231_0_0_6"/>
<dbReference type="UniPathway" id="UPA00098">
    <property type="reaction ID" value="UER00360"/>
</dbReference>
<dbReference type="GO" id="GO:0005737">
    <property type="term" value="C:cytoplasm"/>
    <property type="evidence" value="ECO:0007669"/>
    <property type="project" value="UniProtKB-SubCell"/>
</dbReference>
<dbReference type="GO" id="GO:0004350">
    <property type="term" value="F:glutamate-5-semialdehyde dehydrogenase activity"/>
    <property type="evidence" value="ECO:0007669"/>
    <property type="project" value="UniProtKB-UniRule"/>
</dbReference>
<dbReference type="GO" id="GO:0050661">
    <property type="term" value="F:NADP binding"/>
    <property type="evidence" value="ECO:0007669"/>
    <property type="project" value="InterPro"/>
</dbReference>
<dbReference type="GO" id="GO:0055129">
    <property type="term" value="P:L-proline biosynthetic process"/>
    <property type="evidence" value="ECO:0007669"/>
    <property type="project" value="UniProtKB-UniRule"/>
</dbReference>
<dbReference type="CDD" id="cd07079">
    <property type="entry name" value="ALDH_F18-19_ProA-GPR"/>
    <property type="match status" value="1"/>
</dbReference>
<dbReference type="FunFam" id="3.40.309.10:FF:000006">
    <property type="entry name" value="Gamma-glutamyl phosphate reductase"/>
    <property type="match status" value="1"/>
</dbReference>
<dbReference type="Gene3D" id="3.40.605.10">
    <property type="entry name" value="Aldehyde Dehydrogenase, Chain A, domain 1"/>
    <property type="match status" value="1"/>
</dbReference>
<dbReference type="Gene3D" id="3.40.309.10">
    <property type="entry name" value="Aldehyde Dehydrogenase, Chain A, domain 2"/>
    <property type="match status" value="1"/>
</dbReference>
<dbReference type="HAMAP" id="MF_00412">
    <property type="entry name" value="ProA"/>
    <property type="match status" value="1"/>
</dbReference>
<dbReference type="InterPro" id="IPR016161">
    <property type="entry name" value="Ald_DH/histidinol_DH"/>
</dbReference>
<dbReference type="InterPro" id="IPR016163">
    <property type="entry name" value="Ald_DH_C"/>
</dbReference>
<dbReference type="InterPro" id="IPR016162">
    <property type="entry name" value="Ald_DH_N"/>
</dbReference>
<dbReference type="InterPro" id="IPR015590">
    <property type="entry name" value="Aldehyde_DH_dom"/>
</dbReference>
<dbReference type="InterPro" id="IPR020593">
    <property type="entry name" value="G-glutamylP_reductase_CS"/>
</dbReference>
<dbReference type="InterPro" id="IPR012134">
    <property type="entry name" value="Glu-5-SA_DH"/>
</dbReference>
<dbReference type="InterPro" id="IPR000965">
    <property type="entry name" value="GPR_dom"/>
</dbReference>
<dbReference type="NCBIfam" id="NF001221">
    <property type="entry name" value="PRK00197.1"/>
    <property type="match status" value="1"/>
</dbReference>
<dbReference type="NCBIfam" id="TIGR00407">
    <property type="entry name" value="proA"/>
    <property type="match status" value="1"/>
</dbReference>
<dbReference type="PANTHER" id="PTHR11063:SF8">
    <property type="entry name" value="DELTA-1-PYRROLINE-5-CARBOXYLATE SYNTHASE"/>
    <property type="match status" value="1"/>
</dbReference>
<dbReference type="PANTHER" id="PTHR11063">
    <property type="entry name" value="GLUTAMATE SEMIALDEHYDE DEHYDROGENASE"/>
    <property type="match status" value="1"/>
</dbReference>
<dbReference type="Pfam" id="PF00171">
    <property type="entry name" value="Aldedh"/>
    <property type="match status" value="2"/>
</dbReference>
<dbReference type="PIRSF" id="PIRSF000151">
    <property type="entry name" value="GPR"/>
    <property type="match status" value="1"/>
</dbReference>
<dbReference type="SUPFAM" id="SSF53720">
    <property type="entry name" value="ALDH-like"/>
    <property type="match status" value="1"/>
</dbReference>
<dbReference type="PROSITE" id="PS01223">
    <property type="entry name" value="PROA"/>
    <property type="match status" value="1"/>
</dbReference>
<name>PROA_ACIBT</name>
<comment type="function">
    <text evidence="1">Catalyzes the NADPH-dependent reduction of L-glutamate 5-phosphate into L-glutamate 5-semialdehyde and phosphate. The product spontaneously undergoes cyclization to form 1-pyrroline-5-carboxylate.</text>
</comment>
<comment type="catalytic activity">
    <reaction evidence="1">
        <text>L-glutamate 5-semialdehyde + phosphate + NADP(+) = L-glutamyl 5-phosphate + NADPH + H(+)</text>
        <dbReference type="Rhea" id="RHEA:19541"/>
        <dbReference type="ChEBI" id="CHEBI:15378"/>
        <dbReference type="ChEBI" id="CHEBI:43474"/>
        <dbReference type="ChEBI" id="CHEBI:57783"/>
        <dbReference type="ChEBI" id="CHEBI:58066"/>
        <dbReference type="ChEBI" id="CHEBI:58274"/>
        <dbReference type="ChEBI" id="CHEBI:58349"/>
        <dbReference type="EC" id="1.2.1.41"/>
    </reaction>
</comment>
<comment type="pathway">
    <text evidence="1">Amino-acid biosynthesis; L-proline biosynthesis; L-glutamate 5-semialdehyde from L-glutamate: step 2/2.</text>
</comment>
<comment type="subcellular location">
    <subcellularLocation>
        <location evidence="1">Cytoplasm</location>
    </subcellularLocation>
</comment>
<comment type="similarity">
    <text evidence="1">Belongs to the gamma-glutamyl phosphate reductase family.</text>
</comment>
<feature type="chain" id="PRO_1000123769" description="Gamma-glutamyl phosphate reductase">
    <location>
        <begin position="1"/>
        <end position="421"/>
    </location>
</feature>
<proteinExistence type="inferred from homology"/>
<keyword id="KW-0028">Amino-acid biosynthesis</keyword>
<keyword id="KW-0963">Cytoplasm</keyword>
<keyword id="KW-0521">NADP</keyword>
<keyword id="KW-0560">Oxidoreductase</keyword>
<keyword id="KW-0641">Proline biosynthesis</keyword>
<sequence>MQDSIEQYMQKVGQQARDASRVLTSASTSLKNHALSAIYTALENNQAAILAANQIDMEKGRSNQLDSALLDRLELTPARFKGMLQGLKDVIVLVDPIGEITDLAYRPTGIQIGKMRVPLGVVGMIYESRPNVTLEAASLAIKSGNAIILRGGSEALESNKAIAEAVKHGLKVAGLPEHSVQVIETSDRGAVGHLITMAEYVDVIVPRGGKSLIERVTNEARIPVIKHLDGNCHVFVEAQADLQKALPITLNAKTHRYGVCNAMETLLVDEKIAEVFLPHIAELYAEKQVELRGCPETRRILGSSVKPATEEDWYTEYLGPILAVKVVSGIDEAIDHINKYGSHHTDAIVTENYTLARQFLARVDSSSVVVNASTRFADGFEYGLGAEIGISTDKIHARGPVGLEGLTSQKWIVLGDGQIRQ</sequence>
<reference key="1">
    <citation type="journal article" date="2007" name="Genes Dev.">
        <title>New insights into Acinetobacter baumannii pathogenesis revealed by high-density pyrosequencing and transposon mutagenesis.</title>
        <authorList>
            <person name="Smith M.G."/>
            <person name="Gianoulis T.A."/>
            <person name="Pukatzki S."/>
            <person name="Mekalanos J.J."/>
            <person name="Ornston L.N."/>
            <person name="Gerstein M."/>
            <person name="Snyder M."/>
        </authorList>
    </citation>
    <scope>NUCLEOTIDE SEQUENCE [LARGE SCALE GENOMIC DNA]</scope>
    <source>
        <strain>ATCC 17978 / DSM 105126 / CIP 53.77 / LMG 1025 / NCDC KC755 / 5377</strain>
    </source>
</reference>
<protein>
    <recommendedName>
        <fullName evidence="1">Gamma-glutamyl phosphate reductase</fullName>
        <shortName evidence="1">GPR</shortName>
        <ecNumber evidence="1">1.2.1.41</ecNumber>
    </recommendedName>
    <alternativeName>
        <fullName evidence="1">Glutamate-5-semialdehyde dehydrogenase</fullName>
    </alternativeName>
    <alternativeName>
        <fullName evidence="1">Glutamyl-gamma-semialdehyde dehydrogenase</fullName>
        <shortName evidence="1">GSA dehydrogenase</shortName>
    </alternativeName>
</protein>
<organism>
    <name type="scientific">Acinetobacter baumannii (strain ATCC 17978 / DSM 105126 / CIP 53.77 / LMG 1025 / NCDC KC755 / 5377)</name>
    <dbReference type="NCBI Taxonomy" id="400667"/>
    <lineage>
        <taxon>Bacteria</taxon>
        <taxon>Pseudomonadati</taxon>
        <taxon>Pseudomonadota</taxon>
        <taxon>Gammaproteobacteria</taxon>
        <taxon>Moraxellales</taxon>
        <taxon>Moraxellaceae</taxon>
        <taxon>Acinetobacter</taxon>
        <taxon>Acinetobacter calcoaceticus/baumannii complex</taxon>
    </lineage>
</organism>